<accession>A6Q1I6</accession>
<sequence>MKYTEIKEKSLQELEGLLKEKKLELFGLRMKLKTMQLQDTSAIRKTRKDIARIKTAIAEKRRAG</sequence>
<feature type="chain" id="PRO_1000007541" description="Large ribosomal subunit protein uL29">
    <location>
        <begin position="1"/>
        <end position="64"/>
    </location>
</feature>
<name>RL29_NITSB</name>
<proteinExistence type="inferred from homology"/>
<dbReference type="EMBL" id="AP009178">
    <property type="protein sequence ID" value="BAF69345.1"/>
    <property type="molecule type" value="Genomic_DNA"/>
</dbReference>
<dbReference type="RefSeq" id="WP_012081608.1">
    <property type="nucleotide sequence ID" value="NC_009662.1"/>
</dbReference>
<dbReference type="SMR" id="A6Q1I6"/>
<dbReference type="FunCoup" id="A6Q1I6">
    <property type="interactions" value="384"/>
</dbReference>
<dbReference type="STRING" id="387092.NIS_0231"/>
<dbReference type="KEGG" id="nis:NIS_0231"/>
<dbReference type="eggNOG" id="COG0255">
    <property type="taxonomic scope" value="Bacteria"/>
</dbReference>
<dbReference type="HOGENOM" id="CLU_158491_7_1_7"/>
<dbReference type="InParanoid" id="A6Q1I6"/>
<dbReference type="OrthoDB" id="5373225at2"/>
<dbReference type="Proteomes" id="UP000001118">
    <property type="component" value="Chromosome"/>
</dbReference>
<dbReference type="GO" id="GO:0022625">
    <property type="term" value="C:cytosolic large ribosomal subunit"/>
    <property type="evidence" value="ECO:0007669"/>
    <property type="project" value="TreeGrafter"/>
</dbReference>
<dbReference type="GO" id="GO:0003735">
    <property type="term" value="F:structural constituent of ribosome"/>
    <property type="evidence" value="ECO:0007669"/>
    <property type="project" value="InterPro"/>
</dbReference>
<dbReference type="GO" id="GO:0006412">
    <property type="term" value="P:translation"/>
    <property type="evidence" value="ECO:0007669"/>
    <property type="project" value="UniProtKB-UniRule"/>
</dbReference>
<dbReference type="CDD" id="cd00427">
    <property type="entry name" value="Ribosomal_L29_HIP"/>
    <property type="match status" value="1"/>
</dbReference>
<dbReference type="FunFam" id="1.10.287.310:FF:000001">
    <property type="entry name" value="50S ribosomal protein L29"/>
    <property type="match status" value="1"/>
</dbReference>
<dbReference type="Gene3D" id="1.10.287.310">
    <property type="match status" value="1"/>
</dbReference>
<dbReference type="HAMAP" id="MF_00374">
    <property type="entry name" value="Ribosomal_uL29"/>
    <property type="match status" value="1"/>
</dbReference>
<dbReference type="InterPro" id="IPR050063">
    <property type="entry name" value="Ribosomal_protein_uL29"/>
</dbReference>
<dbReference type="InterPro" id="IPR001854">
    <property type="entry name" value="Ribosomal_uL29"/>
</dbReference>
<dbReference type="InterPro" id="IPR036049">
    <property type="entry name" value="Ribosomal_uL29_sf"/>
</dbReference>
<dbReference type="NCBIfam" id="TIGR00012">
    <property type="entry name" value="L29"/>
    <property type="match status" value="1"/>
</dbReference>
<dbReference type="PANTHER" id="PTHR10916">
    <property type="entry name" value="60S RIBOSOMAL PROTEIN L35/50S RIBOSOMAL PROTEIN L29"/>
    <property type="match status" value="1"/>
</dbReference>
<dbReference type="PANTHER" id="PTHR10916:SF0">
    <property type="entry name" value="LARGE RIBOSOMAL SUBUNIT PROTEIN UL29C"/>
    <property type="match status" value="1"/>
</dbReference>
<dbReference type="Pfam" id="PF00831">
    <property type="entry name" value="Ribosomal_L29"/>
    <property type="match status" value="1"/>
</dbReference>
<dbReference type="SUPFAM" id="SSF46561">
    <property type="entry name" value="Ribosomal protein L29 (L29p)"/>
    <property type="match status" value="1"/>
</dbReference>
<gene>
    <name evidence="1" type="primary">rpmC</name>
    <name type="ordered locus">NIS_0231</name>
</gene>
<organism>
    <name type="scientific">Nitratiruptor sp. (strain SB155-2)</name>
    <dbReference type="NCBI Taxonomy" id="387092"/>
    <lineage>
        <taxon>Bacteria</taxon>
        <taxon>Pseudomonadati</taxon>
        <taxon>Campylobacterota</taxon>
        <taxon>Epsilonproteobacteria</taxon>
        <taxon>Nautiliales</taxon>
        <taxon>Nitratiruptoraceae</taxon>
        <taxon>Nitratiruptor</taxon>
    </lineage>
</organism>
<comment type="similarity">
    <text evidence="1">Belongs to the universal ribosomal protein uL29 family.</text>
</comment>
<evidence type="ECO:0000255" key="1">
    <source>
        <dbReference type="HAMAP-Rule" id="MF_00374"/>
    </source>
</evidence>
<evidence type="ECO:0000305" key="2"/>
<reference key="1">
    <citation type="journal article" date="2007" name="Proc. Natl. Acad. Sci. U.S.A.">
        <title>Deep-sea vent epsilon-proteobacterial genomes provide insights into emergence of pathogens.</title>
        <authorList>
            <person name="Nakagawa S."/>
            <person name="Takaki Y."/>
            <person name="Shimamura S."/>
            <person name="Reysenbach A.-L."/>
            <person name="Takai K."/>
            <person name="Horikoshi K."/>
        </authorList>
    </citation>
    <scope>NUCLEOTIDE SEQUENCE [LARGE SCALE GENOMIC DNA]</scope>
    <source>
        <strain>SB155-2</strain>
    </source>
</reference>
<protein>
    <recommendedName>
        <fullName evidence="1">Large ribosomal subunit protein uL29</fullName>
    </recommendedName>
    <alternativeName>
        <fullName evidence="2">50S ribosomal protein L29</fullName>
    </alternativeName>
</protein>
<keyword id="KW-1185">Reference proteome</keyword>
<keyword id="KW-0687">Ribonucleoprotein</keyword>
<keyword id="KW-0689">Ribosomal protein</keyword>